<sequence length="264" mass="30734">MVKPLPRLRLQGFNNLTKALSFNIYDVCYARTEEERQRYIDYIDERYDADRLTQILTDVAEIIGANILNIARQDYDPQGASVTILISEEPVIDKKQAGKELISDAVVTHMDKSHITVHTYPETHPQEGIATFRADIDVATCGVISPLKALNYLIESLESDIVIMDYRVRGFTRDVKGKKHFIDHKINSIQNFLSKSIKSRYEMFDVNVYQENIFHTKMHLKDFDLDQYLFEEKARNLSFKERMKIEALLKLEIEELFHGRNLAE</sequence>
<organism>
    <name type="scientific">Xylella fastidiosa (strain M23)</name>
    <dbReference type="NCBI Taxonomy" id="405441"/>
    <lineage>
        <taxon>Bacteria</taxon>
        <taxon>Pseudomonadati</taxon>
        <taxon>Pseudomonadota</taxon>
        <taxon>Gammaproteobacteria</taxon>
        <taxon>Lysobacterales</taxon>
        <taxon>Lysobacteraceae</taxon>
        <taxon>Xylella</taxon>
    </lineage>
</organism>
<accession>B2IAF0</accession>
<gene>
    <name evidence="1" type="primary">speD</name>
    <name type="ordered locus">XfasM23_0791</name>
</gene>
<name>SPED_XYLF2</name>
<evidence type="ECO:0000255" key="1">
    <source>
        <dbReference type="HAMAP-Rule" id="MF_00465"/>
    </source>
</evidence>
<protein>
    <recommendedName>
        <fullName evidence="1">S-adenosylmethionine decarboxylase proenzyme</fullName>
        <shortName evidence="1">AdoMetDC</shortName>
        <shortName evidence="1">SAMDC</shortName>
        <ecNumber evidence="1">4.1.1.50</ecNumber>
    </recommendedName>
    <component>
        <recommendedName>
            <fullName evidence="1">S-adenosylmethionine decarboxylase beta chain</fullName>
        </recommendedName>
    </component>
    <component>
        <recommendedName>
            <fullName evidence="1">S-adenosylmethionine decarboxylase alpha chain</fullName>
        </recommendedName>
    </component>
</protein>
<proteinExistence type="inferred from homology"/>
<reference key="1">
    <citation type="journal article" date="2010" name="J. Bacteriol.">
        <title>Whole genome sequences of two Xylella fastidiosa strains (M12 and M23) causing almond leaf scorch disease in California.</title>
        <authorList>
            <person name="Chen J."/>
            <person name="Xie G."/>
            <person name="Han S."/>
            <person name="Chertkov O."/>
            <person name="Sims D."/>
            <person name="Civerolo E.L."/>
        </authorList>
    </citation>
    <scope>NUCLEOTIDE SEQUENCE [LARGE SCALE GENOMIC DNA]</scope>
    <source>
        <strain>M23</strain>
    </source>
</reference>
<keyword id="KW-0068">Autocatalytic cleavage</keyword>
<keyword id="KW-0210">Decarboxylase</keyword>
<keyword id="KW-0456">Lyase</keyword>
<keyword id="KW-0620">Polyamine biosynthesis</keyword>
<keyword id="KW-0670">Pyruvate</keyword>
<keyword id="KW-0949">S-adenosyl-L-methionine</keyword>
<keyword id="KW-0704">Schiff base</keyword>
<keyword id="KW-0745">Spermidine biosynthesis</keyword>
<keyword id="KW-0865">Zymogen</keyword>
<dbReference type="EC" id="4.1.1.50" evidence="1"/>
<dbReference type="EMBL" id="CP001011">
    <property type="protein sequence ID" value="ACB92230.1"/>
    <property type="molecule type" value="Genomic_DNA"/>
</dbReference>
<dbReference type="RefSeq" id="WP_004087867.1">
    <property type="nucleotide sequence ID" value="NC_010577.1"/>
</dbReference>
<dbReference type="SMR" id="B2IAF0"/>
<dbReference type="GeneID" id="93904533"/>
<dbReference type="KEGG" id="xfn:XfasM23_0791"/>
<dbReference type="HOGENOM" id="CLU_092007_0_0_6"/>
<dbReference type="UniPathway" id="UPA00331">
    <property type="reaction ID" value="UER00451"/>
</dbReference>
<dbReference type="Proteomes" id="UP000001698">
    <property type="component" value="Chromosome"/>
</dbReference>
<dbReference type="GO" id="GO:0005829">
    <property type="term" value="C:cytosol"/>
    <property type="evidence" value="ECO:0007669"/>
    <property type="project" value="TreeGrafter"/>
</dbReference>
<dbReference type="GO" id="GO:0004014">
    <property type="term" value="F:adenosylmethionine decarboxylase activity"/>
    <property type="evidence" value="ECO:0007669"/>
    <property type="project" value="UniProtKB-UniRule"/>
</dbReference>
<dbReference type="GO" id="GO:0008295">
    <property type="term" value="P:spermidine biosynthetic process"/>
    <property type="evidence" value="ECO:0007669"/>
    <property type="project" value="UniProtKB-UniRule"/>
</dbReference>
<dbReference type="FunFam" id="3.60.90.10:FF:000001">
    <property type="entry name" value="S-adenosylmethionine decarboxylase proenzyme"/>
    <property type="match status" value="1"/>
</dbReference>
<dbReference type="Gene3D" id="3.60.90.10">
    <property type="entry name" value="S-adenosylmethionine decarboxylase"/>
    <property type="match status" value="1"/>
</dbReference>
<dbReference type="HAMAP" id="MF_00465">
    <property type="entry name" value="AdoMetDC_2"/>
    <property type="match status" value="1"/>
</dbReference>
<dbReference type="InterPro" id="IPR003826">
    <property type="entry name" value="AdoMetDC_fam_prok"/>
</dbReference>
<dbReference type="InterPro" id="IPR009165">
    <property type="entry name" value="S-AdoMet_deCO2ase_bac"/>
</dbReference>
<dbReference type="InterPro" id="IPR016067">
    <property type="entry name" value="S-AdoMet_deCO2ase_core"/>
</dbReference>
<dbReference type="NCBIfam" id="TIGR03331">
    <property type="entry name" value="SAM_DCase_Eco"/>
    <property type="match status" value="1"/>
</dbReference>
<dbReference type="PANTHER" id="PTHR33866">
    <property type="entry name" value="S-ADENOSYLMETHIONINE DECARBOXYLASE PROENZYME"/>
    <property type="match status" value="1"/>
</dbReference>
<dbReference type="PANTHER" id="PTHR33866:SF1">
    <property type="entry name" value="S-ADENOSYLMETHIONINE DECARBOXYLASE PROENZYME"/>
    <property type="match status" value="1"/>
</dbReference>
<dbReference type="Pfam" id="PF02675">
    <property type="entry name" value="AdoMet_dc"/>
    <property type="match status" value="1"/>
</dbReference>
<dbReference type="PIRSF" id="PIRSF001356">
    <property type="entry name" value="SAM_decarboxylas"/>
    <property type="match status" value="1"/>
</dbReference>
<dbReference type="SUPFAM" id="SSF56276">
    <property type="entry name" value="S-adenosylmethionine decarboxylase"/>
    <property type="match status" value="1"/>
</dbReference>
<feature type="chain" id="PRO_0000364425" description="S-adenosylmethionine decarboxylase beta chain" evidence="1">
    <location>
        <begin position="1"/>
        <end position="112"/>
    </location>
</feature>
<feature type="chain" id="PRO_0000364426" description="S-adenosylmethionine decarboxylase alpha chain" evidence="1">
    <location>
        <begin position="113"/>
        <end position="264"/>
    </location>
</feature>
<feature type="active site" description="Schiff-base intermediate with substrate; via pyruvic acid" evidence="1">
    <location>
        <position position="113"/>
    </location>
</feature>
<feature type="active site" description="Proton acceptor; for processing activity" evidence="1">
    <location>
        <position position="118"/>
    </location>
</feature>
<feature type="active site" description="Proton donor; for catalytic activity" evidence="1">
    <location>
        <position position="141"/>
    </location>
</feature>
<feature type="site" description="Cleavage (non-hydrolytic); by autolysis" evidence="1">
    <location>
        <begin position="112"/>
        <end position="113"/>
    </location>
</feature>
<feature type="modified residue" description="Pyruvic acid (Ser); by autocatalysis" evidence="1">
    <location>
        <position position="113"/>
    </location>
</feature>
<comment type="function">
    <text evidence="1">Catalyzes the decarboxylation of S-adenosylmethionine to S-adenosylmethioninamine (dcAdoMet), the propylamine donor required for the synthesis of the polyamines spermine and spermidine from the diamine putrescine.</text>
</comment>
<comment type="catalytic activity">
    <reaction evidence="1">
        <text>S-adenosyl-L-methionine + H(+) = S-adenosyl 3-(methylsulfanyl)propylamine + CO2</text>
        <dbReference type="Rhea" id="RHEA:15981"/>
        <dbReference type="ChEBI" id="CHEBI:15378"/>
        <dbReference type="ChEBI" id="CHEBI:16526"/>
        <dbReference type="ChEBI" id="CHEBI:57443"/>
        <dbReference type="ChEBI" id="CHEBI:59789"/>
        <dbReference type="EC" id="4.1.1.50"/>
    </reaction>
</comment>
<comment type="cofactor">
    <cofactor evidence="1">
        <name>pyruvate</name>
        <dbReference type="ChEBI" id="CHEBI:15361"/>
    </cofactor>
    <text evidence="1">Binds 1 pyruvoyl group covalently per subunit.</text>
</comment>
<comment type="pathway">
    <text evidence="1">Amine and polyamine biosynthesis; S-adenosylmethioninamine biosynthesis; S-adenosylmethioninamine from S-adenosyl-L-methionine: step 1/1.</text>
</comment>
<comment type="subunit">
    <text evidence="1">Heterooctamer of four alpha and four beta chains arranged as a tetramer of alpha/beta heterodimers.</text>
</comment>
<comment type="PTM">
    <text evidence="1">Is synthesized initially as an inactive proenzyme. Formation of the active enzyme involves a self-maturation process in which the active site pyruvoyl group is generated from an internal serine residue via an autocatalytic post-translational modification. Two non-identical subunits are generated from the proenzyme in this reaction, and the pyruvate is formed at the N-terminus of the alpha chain, which is derived from the carboxyl end of the proenzyme. The post-translation cleavage follows an unusual pathway, termed non-hydrolytic serinolysis, in which the side chain hydroxyl group of the serine supplies its oxygen atom to form the C-terminus of the beta chain, while the remainder of the serine residue undergoes an oxidative deamination to produce ammonia and the pyruvoyl group blocking the N-terminus of the alpha chain.</text>
</comment>
<comment type="similarity">
    <text evidence="1">Belongs to the prokaryotic AdoMetDC family. Type 2 subfamily.</text>
</comment>